<organism>
    <name type="scientific">Mus musculus</name>
    <name type="common">Mouse</name>
    <dbReference type="NCBI Taxonomy" id="10090"/>
    <lineage>
        <taxon>Eukaryota</taxon>
        <taxon>Metazoa</taxon>
        <taxon>Chordata</taxon>
        <taxon>Craniata</taxon>
        <taxon>Vertebrata</taxon>
        <taxon>Euteleostomi</taxon>
        <taxon>Mammalia</taxon>
        <taxon>Eutheria</taxon>
        <taxon>Euarchontoglires</taxon>
        <taxon>Glires</taxon>
        <taxon>Rodentia</taxon>
        <taxon>Myomorpha</taxon>
        <taxon>Muroidea</taxon>
        <taxon>Muridae</taxon>
        <taxon>Murinae</taxon>
        <taxon>Mus</taxon>
        <taxon>Mus</taxon>
    </lineage>
</organism>
<evidence type="ECO:0000250" key="1">
    <source>
        <dbReference type="UniProtKB" id="Q800K6"/>
    </source>
</evidence>
<evidence type="ECO:0000250" key="2">
    <source>
        <dbReference type="UniProtKB" id="Q92547"/>
    </source>
</evidence>
<evidence type="ECO:0000255" key="3"/>
<evidence type="ECO:0000255" key="4">
    <source>
        <dbReference type="PROSITE-ProRule" id="PRU00033"/>
    </source>
</evidence>
<evidence type="ECO:0000256" key="5">
    <source>
        <dbReference type="SAM" id="MobiDB-lite"/>
    </source>
</evidence>
<evidence type="ECO:0000269" key="6">
    <source>
    </source>
</evidence>
<evidence type="ECO:0000269" key="7">
    <source>
    </source>
</evidence>
<evidence type="ECO:0000269" key="8">
    <source>
    </source>
</evidence>
<evidence type="ECO:0000269" key="9">
    <source>
    </source>
</evidence>
<evidence type="ECO:0000303" key="10">
    <source>
    </source>
</evidence>
<evidence type="ECO:0000303" key="11">
    <source>
    </source>
</evidence>
<evidence type="ECO:0000305" key="12"/>
<evidence type="ECO:0000312" key="13">
    <source>
        <dbReference type="MGI" id="MGI:1920018"/>
    </source>
</evidence>
<evidence type="ECO:0007744" key="14">
    <source>
    </source>
</evidence>
<evidence type="ECO:0007829" key="15">
    <source>
        <dbReference type="PDB" id="5U6K"/>
    </source>
</evidence>
<keyword id="KW-0002">3D-structure</keyword>
<keyword id="KW-0158">Chromosome</keyword>
<keyword id="KW-0963">Cytoplasm</keyword>
<keyword id="KW-0206">Cytoskeleton</keyword>
<keyword id="KW-0227">DNA damage</keyword>
<keyword id="KW-0234">DNA repair</keyword>
<keyword id="KW-0238">DNA-binding</keyword>
<keyword id="KW-0539">Nucleus</keyword>
<keyword id="KW-0597">Phosphoprotein</keyword>
<keyword id="KW-1185">Reference proteome</keyword>
<keyword id="KW-0677">Repeat</keyword>
<keyword id="KW-0832">Ubl conjugation</keyword>
<comment type="function">
    <text evidence="1 2 6">Scaffold protein that acts as a key protein-protein adapter in DNA replication and DNA repair. Composed of multiple BRCT domains, which specifically recognize and bind phosphorylated proteins, bringing proteins together into functional combinations (PubMed:14718568). Required for DNA replication initiation but not for the formation of pre-replicative complexes or the elongation stages (By similarity). Necessary for the loading of replication factors onto chromatin, including GMNC, CDC45, DNA polymerases and components of the GINS complex (By similarity). Plays a central role in DNA repair by bridging proteins and promoting recruitment of proteins to DNA damage sites (By similarity). Involved in double-strand break (DSB) repair via homologous recombination in S-phase by promoting the exchange between the DNA replication factor A (RPA) complex and RAD51 (By similarity). Mechanistically, TOPBP1 is recruited to DNA damage sites in S-phase via interaction with phosphorylated HTATSF1, and promotes the loading of RAD51, thereby facilitating RAD51 nucleofilaments formation and RPA displacement, followed by homologous recombination (By similarity). Involved in microhomology-mediated end-joining (MMEJ) DNA repair by promoting recruitment of polymerase theta (POLQ) to DNA damage sites during mitosis (By similarity). MMEJ is an alternative non-homologous end-joining (NHEJ) machinery that takes place during mitosis to repair DSBs in DNA that originate in S-phase (By similarity). Recognizes and binds POLQ phosphorylated by PLK1, enabling its recruitment to DSBs for subsequent repair (By similarity). Involved in G1 DNA damage checkpoint by acting as a molecular adapter that couples TP53BP1 and the 9-1-1 complex (By similarity). In response to DNA damage, triggers the recruitment of checkpoint signaling proteins on chromatin, which activate the CHEK1 signaling pathway and block S-phase progression (By similarity). Acts as an activator of the kinase activity of ATR (By similarity). Also required for chromosomal stability when DSBs occur during mitosis by forming filamentous assemblies that bridge MDC1 and tether broken chromosomes during mitosis (By similarity). Together with CIP2A, plays an essential role in the response to genome instability generated by the presence of acentric chromosome fragments derived from shattered chromosomes within micronuclei (By similarity). Micronuclei, which are frequently found in cancer cells, consist of chromatin surrounded by their own nuclear membrane: following breakdown of the micronuclear envelope, a process associated with chromothripsis, the CIP2A-TOPBP1 complex tethers chromosome fragments during mitosis to ensure clustered segregation of the fragments to a single daughter cell nucleus, facilitating re-ligation with limited chromosome scattering and loss (By similarity). Recruits the SWI/SNF chromatin remodeling complex to E2F1-responsive promoters, thereby down-regulating E2F1 activity and inhibiting E2F1-dependent apoptosis during G1/S transition and after DNA damage (By similarity).</text>
</comment>
<comment type="subunit">
    <text evidence="2">Interacts (via BRCT domains 1 and 2) with (phosphorylated) MDC1; promoting TOPBP1 recruitment to DNA damage sites during mitosis. Interacts (via BRCT domains 7 and 8) with (autophosphorylated) ATR; promoting activation of ATR. Interacts (via BRCT domains 7 and 8) with (phosphorylated) POLQ; specifically binds POLQ phosphorylated by PLK1, promoting POLQ recruitment to DNA damage sites. Interacts (via BRCT domains 1 and 2) with (phosphorylated) RAD9A. Interacts (via BRCT domain 2) with (phosphorylated) TP53BP1. Interacts (via BRCT domain 2) with (phosphorylated) HTATSF1. Interacts (via BRCT domains 7 and 8) with (phosphorylated) RAD51; promoting RAD51 recruitment to damaged chromatin. Interacts with CIP2A; forming the CIP2A-TOPBP1 complex. Interacts with POLE. Interacts with UBR5. Interacts with E2F1. Interacts with PML. Interacts with SMARCA2. Interacts with SMARCA4. Interacts with RHNO1. May interact with TOP2B. Interacts with TICRR. Interacts with HELB.</text>
</comment>
<comment type="subcellular location">
    <subcellularLocation>
        <location evidence="2">Nucleus</location>
    </subcellularLocation>
    <subcellularLocation>
        <location evidence="6 7 9">Chromosome</location>
    </subcellularLocation>
    <subcellularLocation>
        <location evidence="7">Cytoplasm</location>
        <location evidence="7">Cytoskeleton</location>
        <location evidence="7">Microtubule organizing center</location>
        <location evidence="7">Centrosome</location>
    </subcellularLocation>
    <subcellularLocation>
        <location evidence="7">Cytoplasm</location>
        <location evidence="7">Cytoskeleton</location>
        <location evidence="7">Spindle pole</location>
    </subcellularLocation>
    <text evidence="2 6 9">Localizes to sites of DNA damage, such as double-stranded breaks (DSBs) (By similarity). Recruited to DNA double-strand break (DSBs) during S-phase following interaction with phosphorylated HTATSF1 (By similarity). Recruited to DSBs during mitosis following interaction with phosphorylated MDC1 (By similarity). Has a uniform nuclear distribution during G phase (By similarity). Colocalizes with BRCA1 at stalled replication forks during S phase (By similarity). In mitotic cells it colocalizes with BRCA1 at spindle poles and centrosomes during metaphase and anaphase (By similarity). Detected in discrete foci together with PML and numerous DNA repair enzymes after DNA damage by alkylating agents, UV or gamma irradiation (By similarity). Detected on unpaired autosomes in meiotic prophase cells (PubMed:14718568, PubMed:22549958). Detected on X and Y chromosomes during later stages of prophase (PubMed:14718568, PubMed:22549958). Colocalizes with ATR and H2AX at unsynapsed chromosome cores during prophase (PubMed:14718568, PubMed:22549958). Localizes to broken chromosomes within micronuclei during interphase and following chromothripsis. Localization to broken chromosomes is mainly independent of MDC1 (By similarity).</text>
</comment>
<comment type="tissue specificity">
    <text evidence="7">Highly expressed in testis.</text>
</comment>
<comment type="developmental stage">
    <text evidence="7">Levels increase during the first 3 weeks after birth and remain high in the fourth week.</text>
</comment>
<comment type="domain">
    <text evidence="2">Some BRCT domains specifically recognize and bind phosphoserine/phosphothreonine marks on proteins. BRCT domains 1 and 2 bind phosphorylated MDC1 and RAD9A. BRCT domain 2 binds phosphorylated HTATSF1 and TP53BP1. BRCT domains 7 and 8 bind phosphorylated ATR, POLQ and RAD51.</text>
</comment>
<comment type="PTM">
    <text evidence="2">Phosphorylated on serine and threonine residues in response to X-ray irradiation.</text>
</comment>
<comment type="PTM">
    <text evidence="2">Ubiquitinated and degraded by the proteasome. X-ray irradiation reduces ubiquitination. Deubiquitinated by USP13; leading to TOPBP1 stabilizion and activation of the ATR-TOPBP1 axis pathway.</text>
</comment>
<comment type="similarity">
    <text evidence="12">Belongs to the TOPBP1 family.</text>
</comment>
<comment type="sequence caution" evidence="12">
    <conflict type="erroneous initiation">
        <sequence resource="EMBL-CDS" id="AAH07170"/>
    </conflict>
    <text>Truncated N-terminus.</text>
</comment>
<comment type="sequence caution" evidence="12">
    <conflict type="frameshift">
        <sequence resource="EMBL-CDS" id="BAC39345"/>
    </conflict>
</comment>
<comment type="sequence caution" evidence="12">
    <conflict type="erroneous initiation">
        <sequence resource="EMBL-CDS" id="BAC97914"/>
    </conflict>
    <text>Extended N-terminus.</text>
</comment>
<gene>
    <name evidence="11 13" type="primary">Topbp1</name>
    <name evidence="10" type="synonym">Kiaa0259</name>
</gene>
<reference key="1">
    <citation type="journal article" date="2003" name="DNA Res.">
        <title>Prediction of the coding sequences of mouse homologues of KIAA gene: III. The complete nucleotide sequences of 500 mouse KIAA-homologous cDNAs identified by screening of terminal sequences of cDNA clones randomly sampled from size-fractionated libraries.</title>
        <authorList>
            <person name="Okazaki N."/>
            <person name="Kikuno R."/>
            <person name="Ohara R."/>
            <person name="Inamoto S."/>
            <person name="Koseki H."/>
            <person name="Hiraoka S."/>
            <person name="Saga Y."/>
            <person name="Nagase T."/>
            <person name="Ohara O."/>
            <person name="Koga H."/>
        </authorList>
    </citation>
    <scope>NUCLEOTIDE SEQUENCE [LARGE SCALE MRNA]</scope>
    <source>
        <tissue>Embryonic tail</tissue>
    </source>
</reference>
<reference key="2">
    <citation type="journal article" date="2004" name="Genome Res.">
        <title>The status, quality, and expansion of the NIH full-length cDNA project: the Mammalian Gene Collection (MGC).</title>
        <authorList>
            <consortium name="The MGC Project Team"/>
        </authorList>
    </citation>
    <scope>NUCLEOTIDE SEQUENCE [LARGE SCALE MRNA]</scope>
    <scope>VARIANT PRO-1420</scope>
    <source>
        <strain>C57BL/6J</strain>
        <strain>FVB/N</strain>
        <tissue>Brain</tissue>
        <tissue>Fetal limb</tissue>
        <tissue>Mammary gland</tissue>
    </source>
</reference>
<reference key="3">
    <citation type="journal article" date="2005" name="Science">
        <title>The transcriptional landscape of the mammalian genome.</title>
        <authorList>
            <person name="Carninci P."/>
            <person name="Kasukawa T."/>
            <person name="Katayama S."/>
            <person name="Gough J."/>
            <person name="Frith M.C."/>
            <person name="Maeda N."/>
            <person name="Oyama R."/>
            <person name="Ravasi T."/>
            <person name="Lenhard B."/>
            <person name="Wells C."/>
            <person name="Kodzius R."/>
            <person name="Shimokawa K."/>
            <person name="Bajic V.B."/>
            <person name="Brenner S.E."/>
            <person name="Batalov S."/>
            <person name="Forrest A.R."/>
            <person name="Zavolan M."/>
            <person name="Davis M.J."/>
            <person name="Wilming L.G."/>
            <person name="Aidinis V."/>
            <person name="Allen J.E."/>
            <person name="Ambesi-Impiombato A."/>
            <person name="Apweiler R."/>
            <person name="Aturaliya R.N."/>
            <person name="Bailey T.L."/>
            <person name="Bansal M."/>
            <person name="Baxter L."/>
            <person name="Beisel K.W."/>
            <person name="Bersano T."/>
            <person name="Bono H."/>
            <person name="Chalk A.M."/>
            <person name="Chiu K.P."/>
            <person name="Choudhary V."/>
            <person name="Christoffels A."/>
            <person name="Clutterbuck D.R."/>
            <person name="Crowe M.L."/>
            <person name="Dalla E."/>
            <person name="Dalrymple B.P."/>
            <person name="de Bono B."/>
            <person name="Della Gatta G."/>
            <person name="di Bernardo D."/>
            <person name="Down T."/>
            <person name="Engstrom P."/>
            <person name="Fagiolini M."/>
            <person name="Faulkner G."/>
            <person name="Fletcher C.F."/>
            <person name="Fukushima T."/>
            <person name="Furuno M."/>
            <person name="Futaki S."/>
            <person name="Gariboldi M."/>
            <person name="Georgii-Hemming P."/>
            <person name="Gingeras T.R."/>
            <person name="Gojobori T."/>
            <person name="Green R.E."/>
            <person name="Gustincich S."/>
            <person name="Harbers M."/>
            <person name="Hayashi Y."/>
            <person name="Hensch T.K."/>
            <person name="Hirokawa N."/>
            <person name="Hill D."/>
            <person name="Huminiecki L."/>
            <person name="Iacono M."/>
            <person name="Ikeo K."/>
            <person name="Iwama A."/>
            <person name="Ishikawa T."/>
            <person name="Jakt M."/>
            <person name="Kanapin A."/>
            <person name="Katoh M."/>
            <person name="Kawasawa Y."/>
            <person name="Kelso J."/>
            <person name="Kitamura H."/>
            <person name="Kitano H."/>
            <person name="Kollias G."/>
            <person name="Krishnan S.P."/>
            <person name="Kruger A."/>
            <person name="Kummerfeld S.K."/>
            <person name="Kurochkin I.V."/>
            <person name="Lareau L.F."/>
            <person name="Lazarevic D."/>
            <person name="Lipovich L."/>
            <person name="Liu J."/>
            <person name="Liuni S."/>
            <person name="McWilliam S."/>
            <person name="Madan Babu M."/>
            <person name="Madera M."/>
            <person name="Marchionni L."/>
            <person name="Matsuda H."/>
            <person name="Matsuzawa S."/>
            <person name="Miki H."/>
            <person name="Mignone F."/>
            <person name="Miyake S."/>
            <person name="Morris K."/>
            <person name="Mottagui-Tabar S."/>
            <person name="Mulder N."/>
            <person name="Nakano N."/>
            <person name="Nakauchi H."/>
            <person name="Ng P."/>
            <person name="Nilsson R."/>
            <person name="Nishiguchi S."/>
            <person name="Nishikawa S."/>
            <person name="Nori F."/>
            <person name="Ohara O."/>
            <person name="Okazaki Y."/>
            <person name="Orlando V."/>
            <person name="Pang K.C."/>
            <person name="Pavan W.J."/>
            <person name="Pavesi G."/>
            <person name="Pesole G."/>
            <person name="Petrovsky N."/>
            <person name="Piazza S."/>
            <person name="Reed J."/>
            <person name="Reid J.F."/>
            <person name="Ring B.Z."/>
            <person name="Ringwald M."/>
            <person name="Rost B."/>
            <person name="Ruan Y."/>
            <person name="Salzberg S.L."/>
            <person name="Sandelin A."/>
            <person name="Schneider C."/>
            <person name="Schoenbach C."/>
            <person name="Sekiguchi K."/>
            <person name="Semple C.A."/>
            <person name="Seno S."/>
            <person name="Sessa L."/>
            <person name="Sheng Y."/>
            <person name="Shibata Y."/>
            <person name="Shimada H."/>
            <person name="Shimada K."/>
            <person name="Silva D."/>
            <person name="Sinclair B."/>
            <person name="Sperling S."/>
            <person name="Stupka E."/>
            <person name="Sugiura K."/>
            <person name="Sultana R."/>
            <person name="Takenaka Y."/>
            <person name="Taki K."/>
            <person name="Tammoja K."/>
            <person name="Tan S.L."/>
            <person name="Tang S."/>
            <person name="Taylor M.S."/>
            <person name="Tegner J."/>
            <person name="Teichmann S.A."/>
            <person name="Ueda H.R."/>
            <person name="van Nimwegen E."/>
            <person name="Verardo R."/>
            <person name="Wei C.L."/>
            <person name="Yagi K."/>
            <person name="Yamanishi H."/>
            <person name="Zabarovsky E."/>
            <person name="Zhu S."/>
            <person name="Zimmer A."/>
            <person name="Hide W."/>
            <person name="Bult C."/>
            <person name="Grimmond S.M."/>
            <person name="Teasdale R.D."/>
            <person name="Liu E.T."/>
            <person name="Brusic V."/>
            <person name="Quackenbush J."/>
            <person name="Wahlestedt C."/>
            <person name="Mattick J.S."/>
            <person name="Hume D.A."/>
            <person name="Kai C."/>
            <person name="Sasaki D."/>
            <person name="Tomaru Y."/>
            <person name="Fukuda S."/>
            <person name="Kanamori-Katayama M."/>
            <person name="Suzuki M."/>
            <person name="Aoki J."/>
            <person name="Arakawa T."/>
            <person name="Iida J."/>
            <person name="Imamura K."/>
            <person name="Itoh M."/>
            <person name="Kato T."/>
            <person name="Kawaji H."/>
            <person name="Kawagashira N."/>
            <person name="Kawashima T."/>
            <person name="Kojima M."/>
            <person name="Kondo S."/>
            <person name="Konno H."/>
            <person name="Nakano K."/>
            <person name="Ninomiya N."/>
            <person name="Nishio T."/>
            <person name="Okada M."/>
            <person name="Plessy C."/>
            <person name="Shibata K."/>
            <person name="Shiraki T."/>
            <person name="Suzuki S."/>
            <person name="Tagami M."/>
            <person name="Waki K."/>
            <person name="Watahiki A."/>
            <person name="Okamura-Oho Y."/>
            <person name="Suzuki H."/>
            <person name="Kawai J."/>
            <person name="Hayashizaki Y."/>
        </authorList>
    </citation>
    <scope>NUCLEOTIDE SEQUENCE [LARGE SCALE MRNA] OF 1-246</scope>
    <source>
        <strain>C57BL/6J</strain>
        <tissue>Embryonic heart</tissue>
        <tissue>Embryonic lung</tissue>
    </source>
</reference>
<reference key="4">
    <citation type="journal article" date="2004" name="Chromosoma">
        <title>TopBP1 localises to centrosomes in mitosis and to chromosome cores in meiosis.</title>
        <authorList>
            <person name="Reini K."/>
            <person name="Uitto L."/>
            <person name="Perera D."/>
            <person name="Moens P.B."/>
            <person name="Freire R."/>
            <person name="Syvaeoja J.E."/>
        </authorList>
    </citation>
    <scope>SUBCELLULAR LOCATION</scope>
    <scope>DEVELOPMENTAL STAGE</scope>
    <scope>TISSUE SPECIFICITY</scope>
</reference>
<reference key="5">
    <citation type="journal article" date="2004" name="Mol. Biol. Cell">
        <title>TopBP1 and ATR colocalization at meiotic chromosomes: role of TopBP1/Cut5 in the meiotic recombination checkpoint.</title>
        <authorList>
            <person name="Perera D."/>
            <person name="Perez-Hidalgo L."/>
            <person name="Moens P.B."/>
            <person name="Reini K."/>
            <person name="Lakin N."/>
            <person name="Syvaeoja J.E."/>
            <person name="San-Segundo P.A."/>
            <person name="Freire R."/>
        </authorList>
    </citation>
    <scope>FUNCTION</scope>
    <scope>SUBCELLULAR LOCATION</scope>
</reference>
<reference key="6">
    <citation type="journal article" date="2010" name="Cell">
        <title>A tissue-specific atlas of mouse protein phosphorylation and expression.</title>
        <authorList>
            <person name="Huttlin E.L."/>
            <person name="Jedrychowski M.P."/>
            <person name="Elias J.E."/>
            <person name="Goswami T."/>
            <person name="Rad R."/>
            <person name="Beausoleil S.A."/>
            <person name="Villen J."/>
            <person name="Haas W."/>
            <person name="Sowa M.E."/>
            <person name="Gygi S.P."/>
        </authorList>
    </citation>
    <scope>PHOSPHORYLATION [LARGE SCALE ANALYSIS] AT SER-862; SER-863 AND SER-890</scope>
    <scope>IDENTIFICATION BY MASS SPECTROMETRY [LARGE SCALE ANALYSIS]</scope>
    <source>
        <tissue>Lung</tissue>
        <tissue>Spleen</tissue>
        <tissue>Testis</tissue>
    </source>
</reference>
<reference key="7">
    <citation type="journal article" date="2012" name="Genes Dev.">
        <title>Meiotic DNA double-strand breaks and chromosome asynapsis in mice are monitored by distinct HORMAD2-independent and -dependent mechanisms.</title>
        <authorList>
            <person name="Wojtasz L."/>
            <person name="Cloutier J.M."/>
            <person name="Baumann M."/>
            <person name="Daniel K."/>
            <person name="Varga J."/>
            <person name="Fu J."/>
            <person name="Anastassiadis K."/>
            <person name="Stewart A.F."/>
            <person name="Remenyi A."/>
            <person name="Turner J.M."/>
            <person name="Toth A."/>
        </authorList>
    </citation>
    <scope>SUBCELLULAR LOCATION</scope>
</reference>
<proteinExistence type="evidence at protein level"/>
<dbReference type="EMBL" id="AK129104">
    <property type="protein sequence ID" value="BAC97914.1"/>
    <property type="status" value="ALT_INIT"/>
    <property type="molecule type" value="mRNA"/>
</dbReference>
<dbReference type="EMBL" id="BC006707">
    <property type="protein sequence ID" value="AAH06707.1"/>
    <property type="molecule type" value="mRNA"/>
</dbReference>
<dbReference type="EMBL" id="BC007170">
    <property type="protein sequence ID" value="AAH07170.1"/>
    <property type="status" value="ALT_INIT"/>
    <property type="molecule type" value="mRNA"/>
</dbReference>
<dbReference type="EMBL" id="BC026608">
    <property type="protein sequence ID" value="AAH26608.1"/>
    <property type="molecule type" value="mRNA"/>
</dbReference>
<dbReference type="EMBL" id="BC049797">
    <property type="protein sequence ID" value="AAH49797.1"/>
    <property type="molecule type" value="mRNA"/>
</dbReference>
<dbReference type="EMBL" id="BC062111">
    <property type="protein sequence ID" value="AAH62111.1"/>
    <property type="molecule type" value="mRNA"/>
</dbReference>
<dbReference type="EMBL" id="AK084654">
    <property type="protein sequence ID" value="BAC39241.2"/>
    <property type="molecule type" value="mRNA"/>
</dbReference>
<dbReference type="EMBL" id="AK085031">
    <property type="protein sequence ID" value="BAC39345.1"/>
    <property type="status" value="ALT_FRAME"/>
    <property type="molecule type" value="mRNA"/>
</dbReference>
<dbReference type="CCDS" id="CCDS23453.1"/>
<dbReference type="RefSeq" id="NP_795953.2">
    <property type="nucleotide sequence ID" value="NM_176979.5"/>
</dbReference>
<dbReference type="RefSeq" id="XP_006511770.1">
    <property type="nucleotide sequence ID" value="XM_006511707.4"/>
</dbReference>
<dbReference type="PDB" id="5U6K">
    <property type="method" value="X-ray"/>
    <property type="resolution" value="2.60 A"/>
    <property type="chains" value="A/B/C/D/E/F/G/H=553-746"/>
</dbReference>
<dbReference type="PDBsum" id="5U6K"/>
<dbReference type="SMR" id="Q6ZQF0"/>
<dbReference type="BioGRID" id="231681">
    <property type="interactions" value="13"/>
</dbReference>
<dbReference type="ComplexPortal" id="CPX-4721">
    <property type="entry name" value="BRCA1-B complex"/>
</dbReference>
<dbReference type="FunCoup" id="Q6ZQF0">
    <property type="interactions" value="4282"/>
</dbReference>
<dbReference type="IntAct" id="Q6ZQF0">
    <property type="interactions" value="10"/>
</dbReference>
<dbReference type="MINT" id="Q6ZQF0"/>
<dbReference type="STRING" id="10090.ENSMUSP00000035164"/>
<dbReference type="iPTMnet" id="Q6ZQF0"/>
<dbReference type="PhosphoSitePlus" id="Q6ZQF0"/>
<dbReference type="jPOST" id="Q6ZQF0"/>
<dbReference type="PaxDb" id="10090-ENSMUSP00000035164"/>
<dbReference type="PeptideAtlas" id="Q6ZQF0"/>
<dbReference type="ProteomicsDB" id="259157"/>
<dbReference type="Pumba" id="Q6ZQF0"/>
<dbReference type="Antibodypedia" id="8745">
    <property type="antibodies" value="327 antibodies from 32 providers"/>
</dbReference>
<dbReference type="DNASU" id="235559"/>
<dbReference type="Ensembl" id="ENSMUST00000035164.10">
    <property type="protein sequence ID" value="ENSMUSP00000035164.4"/>
    <property type="gene ID" value="ENSMUSG00000032555.11"/>
</dbReference>
<dbReference type="GeneID" id="235559"/>
<dbReference type="KEGG" id="mmu:235559"/>
<dbReference type="UCSC" id="uc009rgl.1">
    <property type="organism name" value="mouse"/>
</dbReference>
<dbReference type="AGR" id="MGI:1920018"/>
<dbReference type="CTD" id="11073"/>
<dbReference type="MGI" id="MGI:1920018">
    <property type="gene designation" value="Topbp1"/>
</dbReference>
<dbReference type="VEuPathDB" id="HostDB:ENSMUSG00000032555"/>
<dbReference type="eggNOG" id="KOG1929">
    <property type="taxonomic scope" value="Eukaryota"/>
</dbReference>
<dbReference type="GeneTree" id="ENSGT00940000157001"/>
<dbReference type="HOGENOM" id="CLU_004165_1_0_1"/>
<dbReference type="InParanoid" id="Q6ZQF0"/>
<dbReference type="OMA" id="NVHCLKT"/>
<dbReference type="OrthoDB" id="251770at2759"/>
<dbReference type="PhylomeDB" id="Q6ZQF0"/>
<dbReference type="TreeFam" id="TF326403"/>
<dbReference type="Reactome" id="R-MMU-5685938">
    <property type="pathway name" value="HDR through Single Strand Annealing (SSA)"/>
</dbReference>
<dbReference type="Reactome" id="R-MMU-5693607">
    <property type="pathway name" value="Processing of DNA double-strand break ends"/>
</dbReference>
<dbReference type="Reactome" id="R-MMU-6804756">
    <property type="pathway name" value="Regulation of TP53 Activity through Phosphorylation"/>
</dbReference>
<dbReference type="Reactome" id="R-MMU-69473">
    <property type="pathway name" value="G2/M DNA damage checkpoint"/>
</dbReference>
<dbReference type="BioGRID-ORCS" id="235559">
    <property type="hits" value="25 hits in 118 CRISPR screens"/>
</dbReference>
<dbReference type="ChiTaRS" id="Topbp1">
    <property type="organism name" value="mouse"/>
</dbReference>
<dbReference type="PRO" id="PR:Q6ZQF0"/>
<dbReference type="Proteomes" id="UP000000589">
    <property type="component" value="Chromosome 9"/>
</dbReference>
<dbReference type="RNAct" id="Q6ZQF0">
    <property type="molecule type" value="protein"/>
</dbReference>
<dbReference type="Bgee" id="ENSMUSG00000032555">
    <property type="expression patterns" value="Expressed in embryonic post-anal tail and 264 other cell types or tissues"/>
</dbReference>
<dbReference type="ExpressionAtlas" id="Q6ZQF0">
    <property type="expression patterns" value="baseline and differential"/>
</dbReference>
<dbReference type="GO" id="GO:0015629">
    <property type="term" value="C:actin cytoskeleton"/>
    <property type="evidence" value="ECO:0007669"/>
    <property type="project" value="Ensembl"/>
</dbReference>
<dbReference type="GO" id="GO:0070532">
    <property type="term" value="C:BRCA1-B complex"/>
    <property type="evidence" value="ECO:0000266"/>
    <property type="project" value="ComplexPortal"/>
</dbReference>
<dbReference type="GO" id="GO:0005813">
    <property type="term" value="C:centrosome"/>
    <property type="evidence" value="ECO:0007669"/>
    <property type="project" value="UniProtKB-SubCell"/>
</dbReference>
<dbReference type="GO" id="GO:0005694">
    <property type="term" value="C:chromosome"/>
    <property type="evidence" value="ECO:0000314"/>
    <property type="project" value="UniProtKB"/>
</dbReference>
<dbReference type="GO" id="GO:0000794">
    <property type="term" value="C:condensed nuclear chromosome"/>
    <property type="evidence" value="ECO:0000314"/>
    <property type="project" value="MGI"/>
</dbReference>
<dbReference type="GO" id="GO:0005737">
    <property type="term" value="C:cytoplasm"/>
    <property type="evidence" value="ECO:0007669"/>
    <property type="project" value="UniProtKB-KW"/>
</dbReference>
<dbReference type="GO" id="GO:0001673">
    <property type="term" value="C:male germ cell nucleus"/>
    <property type="evidence" value="ECO:0000314"/>
    <property type="project" value="MGI"/>
</dbReference>
<dbReference type="GO" id="GO:0005634">
    <property type="term" value="C:nucleus"/>
    <property type="evidence" value="ECO:0000303"/>
    <property type="project" value="ComplexPortal"/>
</dbReference>
<dbReference type="GO" id="GO:0005886">
    <property type="term" value="C:plasma membrane"/>
    <property type="evidence" value="ECO:0007669"/>
    <property type="project" value="Ensembl"/>
</dbReference>
<dbReference type="GO" id="GO:0016605">
    <property type="term" value="C:PML body"/>
    <property type="evidence" value="ECO:0007669"/>
    <property type="project" value="Ensembl"/>
</dbReference>
<dbReference type="GO" id="GO:0035861">
    <property type="term" value="C:site of double-strand break"/>
    <property type="evidence" value="ECO:0000250"/>
    <property type="project" value="UniProtKB"/>
</dbReference>
<dbReference type="GO" id="GO:0000922">
    <property type="term" value="C:spindle pole"/>
    <property type="evidence" value="ECO:0007669"/>
    <property type="project" value="UniProtKB-SubCell"/>
</dbReference>
<dbReference type="GO" id="GO:0140463">
    <property type="term" value="F:chromatin-protein adaptor activity"/>
    <property type="evidence" value="ECO:0000250"/>
    <property type="project" value="UniProtKB"/>
</dbReference>
<dbReference type="GO" id="GO:0003677">
    <property type="term" value="F:DNA binding"/>
    <property type="evidence" value="ECO:0007669"/>
    <property type="project" value="UniProtKB-KW"/>
</dbReference>
<dbReference type="GO" id="GO:0042802">
    <property type="term" value="F:identical protein binding"/>
    <property type="evidence" value="ECO:0007669"/>
    <property type="project" value="Ensembl"/>
</dbReference>
<dbReference type="GO" id="GO:0140031">
    <property type="term" value="F:phosphorylation-dependent protein binding"/>
    <property type="evidence" value="ECO:0000250"/>
    <property type="project" value="UniProtKB"/>
</dbReference>
<dbReference type="GO" id="GO:0043539">
    <property type="term" value="F:protein serine/threonine kinase activator activity"/>
    <property type="evidence" value="ECO:0000250"/>
    <property type="project" value="UniProtKB"/>
</dbReference>
<dbReference type="GO" id="GO:0141112">
    <property type="term" value="P:broken chromosome clustering"/>
    <property type="evidence" value="ECO:0007669"/>
    <property type="project" value="Ensembl"/>
</dbReference>
<dbReference type="GO" id="GO:0051276">
    <property type="term" value="P:chromosome organization"/>
    <property type="evidence" value="ECO:0000250"/>
    <property type="project" value="UniProtKB"/>
</dbReference>
<dbReference type="GO" id="GO:0000077">
    <property type="term" value="P:DNA damage checkpoint signaling"/>
    <property type="evidence" value="ECO:0007669"/>
    <property type="project" value="Ensembl"/>
</dbReference>
<dbReference type="GO" id="GO:0006974">
    <property type="term" value="P:DNA damage response"/>
    <property type="evidence" value="ECO:0000250"/>
    <property type="project" value="UniProtKB"/>
</dbReference>
<dbReference type="GO" id="GO:0006281">
    <property type="term" value="P:DNA repair"/>
    <property type="evidence" value="ECO:0000303"/>
    <property type="project" value="ComplexPortal"/>
</dbReference>
<dbReference type="GO" id="GO:0000076">
    <property type="term" value="P:DNA replication checkpoint signaling"/>
    <property type="evidence" value="ECO:0000250"/>
    <property type="project" value="UniProtKB"/>
</dbReference>
<dbReference type="GO" id="GO:0097681">
    <property type="term" value="P:double-strand break repair via alternative nonhomologous end joining"/>
    <property type="evidence" value="ECO:0000250"/>
    <property type="project" value="UniProtKB"/>
</dbReference>
<dbReference type="GO" id="GO:0097680">
    <property type="term" value="P:double-strand break repair via classical nonhomologous end joining"/>
    <property type="evidence" value="ECO:0000250"/>
    <property type="project" value="UniProtKB"/>
</dbReference>
<dbReference type="GO" id="GO:0000724">
    <property type="term" value="P:double-strand break repair via homologous recombination"/>
    <property type="evidence" value="ECO:0000250"/>
    <property type="project" value="UniProtKB"/>
</dbReference>
<dbReference type="GO" id="GO:0035825">
    <property type="term" value="P:homologous recombination"/>
    <property type="evidence" value="ECO:0000303"/>
    <property type="project" value="ComplexPortal"/>
</dbReference>
<dbReference type="GO" id="GO:1990166">
    <property type="term" value="P:protein localization to site of double-strand break"/>
    <property type="evidence" value="ECO:0007669"/>
    <property type="project" value="Ensembl"/>
</dbReference>
<dbReference type="GO" id="GO:0007131">
    <property type="term" value="P:reciprocal meiotic recombination"/>
    <property type="evidence" value="ECO:0000247"/>
    <property type="project" value="MGI"/>
</dbReference>
<dbReference type="GO" id="GO:0010212">
    <property type="term" value="P:response to ionizing radiation"/>
    <property type="evidence" value="ECO:0007669"/>
    <property type="project" value="Ensembl"/>
</dbReference>
<dbReference type="CDD" id="cd17737">
    <property type="entry name" value="BRCT_TopBP1_rpt1"/>
    <property type="match status" value="1"/>
</dbReference>
<dbReference type="CDD" id="cd17731">
    <property type="entry name" value="BRCT_TopBP1_rpt2_like"/>
    <property type="match status" value="1"/>
</dbReference>
<dbReference type="CDD" id="cd17718">
    <property type="entry name" value="BRCT_TopBP1_rpt3"/>
    <property type="match status" value="1"/>
</dbReference>
<dbReference type="CDD" id="cd17749">
    <property type="entry name" value="BRCT_TopBP1_rpt4"/>
    <property type="match status" value="1"/>
</dbReference>
<dbReference type="CDD" id="cd18434">
    <property type="entry name" value="BRCT_TopBP1_rpt5"/>
    <property type="match status" value="1"/>
</dbReference>
<dbReference type="CDD" id="cd17727">
    <property type="entry name" value="BRCT_TopBP1_rpt6"/>
    <property type="match status" value="1"/>
</dbReference>
<dbReference type="CDD" id="cd17738">
    <property type="entry name" value="BRCT_TopBP1_rpt7"/>
    <property type="match status" value="1"/>
</dbReference>
<dbReference type="CDD" id="cd17728">
    <property type="entry name" value="BRCT_TopBP1_rpt8"/>
    <property type="match status" value="1"/>
</dbReference>
<dbReference type="FunFam" id="3.40.50.10190:FF:000018">
    <property type="entry name" value="DNA topoisomerase 2-binding protein 1"/>
    <property type="match status" value="1"/>
</dbReference>
<dbReference type="FunFam" id="3.40.50.10190:FF:000028">
    <property type="entry name" value="DNA topoisomerase 2-binding protein 1 isoform X1"/>
    <property type="match status" value="1"/>
</dbReference>
<dbReference type="FunFam" id="3.40.50.10190:FF:000010">
    <property type="entry name" value="DNA topoisomerase II binding protein 1"/>
    <property type="match status" value="1"/>
</dbReference>
<dbReference type="FunFam" id="3.40.50.10190:FF:000020">
    <property type="entry name" value="DNA topoisomerase II binding protein 1"/>
    <property type="match status" value="1"/>
</dbReference>
<dbReference type="FunFam" id="3.40.50.10190:FF:000021">
    <property type="entry name" value="DNA topoisomerase II binding protein 1"/>
    <property type="match status" value="1"/>
</dbReference>
<dbReference type="FunFam" id="3.40.50.10190:FF:000022">
    <property type="entry name" value="DNA topoisomerase II binding protein 1"/>
    <property type="match status" value="1"/>
</dbReference>
<dbReference type="FunFam" id="3.40.50.10190:FF:000023">
    <property type="entry name" value="DNA topoisomerase II binding protein 1"/>
    <property type="match status" value="1"/>
</dbReference>
<dbReference type="FunFam" id="3.40.50.10190:FF:000029">
    <property type="entry name" value="DNA topoisomerase II binding protein 1"/>
    <property type="match status" value="1"/>
</dbReference>
<dbReference type="FunFam" id="3.40.50.10190:FF:000033">
    <property type="entry name" value="DNA topoisomerase II binding protein 1"/>
    <property type="match status" value="1"/>
</dbReference>
<dbReference type="Gene3D" id="3.40.50.10190">
    <property type="entry name" value="BRCT domain"/>
    <property type="match status" value="9"/>
</dbReference>
<dbReference type="InterPro" id="IPR001357">
    <property type="entry name" value="BRCT_dom"/>
</dbReference>
<dbReference type="InterPro" id="IPR036420">
    <property type="entry name" value="BRCT_dom_sf"/>
</dbReference>
<dbReference type="InterPro" id="IPR049936">
    <property type="entry name" value="BRCT_TopBP1_rpt8"/>
</dbReference>
<dbReference type="InterPro" id="IPR049542">
    <property type="entry name" value="TopBP1-like_BRCT0"/>
</dbReference>
<dbReference type="InterPro" id="IPR044737">
    <property type="entry name" value="TopBP1_BRCT_1"/>
</dbReference>
<dbReference type="PANTHER" id="PTHR13561">
    <property type="entry name" value="DNA REPLICATION REGULATOR DPB11-RELATED"/>
    <property type="match status" value="1"/>
</dbReference>
<dbReference type="PANTHER" id="PTHR13561:SF20">
    <property type="entry name" value="DNA TOPOISOMERASE 2-BINDING PROTEIN 1"/>
    <property type="match status" value="1"/>
</dbReference>
<dbReference type="Pfam" id="PF00533">
    <property type="entry name" value="BRCT"/>
    <property type="match status" value="3"/>
</dbReference>
<dbReference type="Pfam" id="PF23294">
    <property type="entry name" value="BRCT_TopB1_SLF1"/>
    <property type="match status" value="1"/>
</dbReference>
<dbReference type="Pfam" id="PF12738">
    <property type="entry name" value="PTCB-BRCT"/>
    <property type="match status" value="3"/>
</dbReference>
<dbReference type="Pfam" id="PF21298">
    <property type="entry name" value="TopBP1_BRCT0"/>
    <property type="match status" value="1"/>
</dbReference>
<dbReference type="SMART" id="SM00292">
    <property type="entry name" value="BRCT"/>
    <property type="match status" value="8"/>
</dbReference>
<dbReference type="SUPFAM" id="SSF52113">
    <property type="entry name" value="BRCT domain"/>
    <property type="match status" value="7"/>
</dbReference>
<dbReference type="PROSITE" id="PS50172">
    <property type="entry name" value="BRCT"/>
    <property type="match status" value="6"/>
</dbReference>
<name>TOPB1_MOUSE</name>
<sequence>MSRNDQEPFLVKFLKSSDNSECFFKALESIKELQSEDYLQIITDEEALKIRENDKSLYICDRFSGTVFDHLKQLGCRIVGPQVVTFCMRHQQCVPRAEHPVYNMIMSDVTVSCTSLDKDKREEVHKYVQMMGGRVYRDLNVSVTHLIAGEVGSKKYLVAANLKKPILLPSWIKTLWEKSQEKKITKYTDVNMEDFKCPIFLGCIICVTGLNGIHRKTVQQLTAKHGGQYMGQLKMNECTHLIVQEPKGQKYECARRWNVHCVTLQWFHDSIEKGFCQDESIYKAETRVEAKMVPDTSTPTAQSNAESHTLADVSHISNINGSCVNETMFGSTTSKLECSLENLENLDISMFQAPEDLLDGCRIYLCGFSGRKLDKLRRLINSGGGVRFNQLNEDVTHVIVGDYDDDVRQFWSKSSHRPHVVGAKWLLECFTKGYILPEESYIHTNYQPAGIAVSDQPGNQTAVLDKSGSFSKSALVPAERLQQADEDLLAQYGNDDSTMVEAKLSEALEPEVGPCPGSAHREPCDDSTHISVQEENKSSVSHCILDDSTVREEGLFSQKSFLVLGFSVENKCNIVDIIREHAGKIVSLPSRIVADYAVVPLLGCEVDVTVGEVVTNTWLVTCIDNQTLVDPKSNPLFTPVSVMSGVTPLEDCVISFSQCVGAERDSLVFLANHLGASVQEFFVRKANAKKGMLASTHLIVKEPTGSKYEAAKKWSLPAVNISWLLETARIGKRADENHFLVDNAPKQEQVLETKIPNGVSSNPDLPAHPDAHLEIHRKKAVTPLDMNRFQSRAFRAVISQQRGQDPTFPPVRQPLTKEPSLHLDTPSKFLSKDKLFKPSFDVTDALAALETPNAASQKRKLSSPLSEVIVRNLTVALANSSRNTDSHSASPQLKGAHLEEEETRKPLDSVVVCVSKKLSKKQSELNGVAASLGAEYRWSFDETVTHFIYQGRANDSNREYKSAKERGVHIVSEHWLLECAQEYKHLPESLYPHTYNPKMSLDINTVQDGRLCNSRAPLAVSASKDDGPDHLSVEGNETNTMGTNDKESPLLNGSGRDDCKGALTQALEMRENFQKQLQEIMSATCIVKTPAQKTCMSRSSCNSASSTPDSARSVRSGRSRVLEALRQSRQAVPDVNTEPSQNEQIIWDDPTAREERARLASNLQWPSDPTQHSELQVEIKMPDDSPSRKPVYHSEIAEQASCVTQAPGHPGSEEPEPPVAERPLIPEPQAPAVASPLAKPPVAPQPADKIETQEETHRKVKKQYVFQMSSLNSQERIDYCRLIKDLGGSVIEKQCSDPSCTHMVVGYPLRNEKYLASMAAGKWVLHRSYLDACKTAGRFVQEEDYEWGSSSILDALPDVTEHQQKLALAAMRWRKRIQQSQESGIVEGAFSGWKAILRVDRPREAGFKRLLQAGGAKVLSGHPEPLLKDATHLFCDFNKLKPDDCRVFIAEATAQNMVCLKTEYIADYLMLESPPCADNYRVSEAALFHNKKGGPGLPQKRKTPAENVVKRPRVH</sequence>
<feature type="chain" id="PRO_0000072632" description="DNA topoisomerase 2-binding protein 1">
    <location>
        <begin position="1"/>
        <end position="1515"/>
    </location>
</feature>
<feature type="domain" description="BRCT 1" evidence="4">
    <location>
        <begin position="101"/>
        <end position="189"/>
    </location>
</feature>
<feature type="domain" description="BRCT 2" evidence="4">
    <location>
        <begin position="195"/>
        <end position="284"/>
    </location>
</feature>
<feature type="domain" description="BRCT 3" evidence="4">
    <location>
        <begin position="353"/>
        <end position="443"/>
    </location>
</feature>
<feature type="domain" description="BRCT 4" evidence="4">
    <location>
        <begin position="551"/>
        <end position="636"/>
    </location>
</feature>
<feature type="domain" description="BRCT 5" evidence="4">
    <location>
        <begin position="644"/>
        <end position="741"/>
    </location>
</feature>
<feature type="domain" description="BRCT 6" evidence="4">
    <location>
        <begin position="902"/>
        <end position="993"/>
    </location>
</feature>
<feature type="domain" description="BRCT 7" evidence="4">
    <location>
        <begin position="1255"/>
        <end position="1347"/>
    </location>
</feature>
<feature type="region of interest" description="Interaction with CIP2A" evidence="2">
    <location>
        <begin position="759"/>
        <end position="893"/>
    </location>
</feature>
<feature type="region of interest" description="Disordered" evidence="5">
    <location>
        <begin position="799"/>
        <end position="826"/>
    </location>
</feature>
<feature type="region of interest" description="Disordered" evidence="5">
    <location>
        <begin position="880"/>
        <end position="901"/>
    </location>
</feature>
<feature type="region of interest" description="Disordered" evidence="5">
    <location>
        <begin position="1020"/>
        <end position="1055"/>
    </location>
</feature>
<feature type="region of interest" description="Disordered" evidence="5">
    <location>
        <begin position="1097"/>
        <end position="1119"/>
    </location>
</feature>
<feature type="region of interest" description="Disordered" evidence="5">
    <location>
        <begin position="1203"/>
        <end position="1255"/>
    </location>
</feature>
<feature type="region of interest" description="Disordered" evidence="5">
    <location>
        <begin position="1491"/>
        <end position="1515"/>
    </location>
</feature>
<feature type="short sequence motif" description="Nuclear localization signal" evidence="3">
    <location>
        <begin position="1510"/>
        <end position="1513"/>
    </location>
</feature>
<feature type="compositionally biased region" description="Polar residues" evidence="5">
    <location>
        <begin position="880"/>
        <end position="891"/>
    </location>
</feature>
<feature type="compositionally biased region" description="Basic and acidic residues" evidence="5">
    <location>
        <begin position="1023"/>
        <end position="1032"/>
    </location>
</feature>
<feature type="compositionally biased region" description="Low complexity" evidence="5">
    <location>
        <begin position="1097"/>
        <end position="1116"/>
    </location>
</feature>
<feature type="compositionally biased region" description="Pro residues" evidence="5">
    <location>
        <begin position="1217"/>
        <end position="1229"/>
    </location>
</feature>
<feature type="modified residue" description="Phosphothreonine" evidence="2">
    <location>
        <position position="298"/>
    </location>
</feature>
<feature type="modified residue" description="Phosphothreonine" evidence="2">
    <location>
        <position position="782"/>
    </location>
</feature>
<feature type="modified residue" description="Phosphothreonine" evidence="2">
    <location>
        <position position="851"/>
    </location>
</feature>
<feature type="modified residue" description="Phosphoserine" evidence="14">
    <location>
        <position position="862"/>
    </location>
</feature>
<feature type="modified residue" description="Phosphoserine" evidence="14">
    <location>
        <position position="863"/>
    </location>
</feature>
<feature type="modified residue" description="Phosphoserine" evidence="2">
    <location>
        <position position="866"/>
    </location>
</feature>
<feature type="modified residue" description="Phosphoserine" evidence="2">
    <location>
        <position position="888"/>
    </location>
</feature>
<feature type="modified residue" description="Phosphoserine" evidence="14">
    <location>
        <position position="890"/>
    </location>
</feature>
<feature type="modified residue" description="Phosphothreonine" evidence="2">
    <location>
        <position position="1064"/>
    </location>
</feature>
<feature type="sequence variant" description="In strain: FVB/N." evidence="8">
    <original>S</original>
    <variation>P</variation>
    <location>
        <position position="1420"/>
    </location>
</feature>
<feature type="sequence conflict" description="In Ref. 2; AAH07170." evidence="12" ref="2">
    <original>V</original>
    <variation>I</variation>
    <location>
        <position position="324"/>
    </location>
</feature>
<feature type="sequence conflict" description="In Ref. 2; AAH07170." evidence="12" ref="2">
    <original>T</original>
    <variation>I</variation>
    <location>
        <position position="461"/>
    </location>
</feature>
<feature type="sequence conflict" description="In Ref. 2; AAH07170." evidence="12" ref="2">
    <original>R</original>
    <variation>L</variation>
    <location>
        <position position="521"/>
    </location>
</feature>
<feature type="sequence conflict" description="In Ref. 2; AAH07170." evidence="12" ref="2">
    <original>D</original>
    <variation>E</variation>
    <location>
        <position position="607"/>
    </location>
</feature>
<feature type="sequence conflict" description="In Ref. 2; AAH62111." evidence="12" ref="2">
    <original>L</original>
    <variation>P</variation>
    <location>
        <position position="835"/>
    </location>
</feature>
<feature type="sequence conflict" description="In Ref. 2; AAH07170." evidence="12" ref="2">
    <original>M</original>
    <variation>I</variation>
    <location>
        <position position="1041"/>
    </location>
</feature>
<feature type="turn" evidence="15">
    <location>
        <begin position="555"/>
        <end position="558"/>
    </location>
</feature>
<feature type="strand" evidence="15">
    <location>
        <begin position="560"/>
        <end position="563"/>
    </location>
</feature>
<feature type="helix" evidence="15">
    <location>
        <begin position="568"/>
        <end position="579"/>
    </location>
</feature>
<feature type="turn" evidence="15">
    <location>
        <begin position="580"/>
        <end position="582"/>
    </location>
</feature>
<feature type="strand" evidence="15">
    <location>
        <begin position="595"/>
        <end position="599"/>
    </location>
</feature>
<feature type="strand" evidence="15">
    <location>
        <begin position="611"/>
        <end position="615"/>
    </location>
</feature>
<feature type="helix" evidence="15">
    <location>
        <begin position="616"/>
        <end position="625"/>
    </location>
</feature>
<feature type="helix" evidence="15">
    <location>
        <begin position="631"/>
        <end position="633"/>
    </location>
</feature>
<feature type="helix" evidence="15">
    <location>
        <begin position="635"/>
        <end position="637"/>
    </location>
</feature>
<feature type="turn" evidence="15">
    <location>
        <begin position="648"/>
        <end position="651"/>
    </location>
</feature>
<feature type="strand" evidence="15">
    <location>
        <begin position="653"/>
        <end position="656"/>
    </location>
</feature>
<feature type="helix" evidence="15">
    <location>
        <begin position="661"/>
        <end position="673"/>
    </location>
</feature>
<feature type="helix" evidence="15">
    <location>
        <begin position="688"/>
        <end position="690"/>
    </location>
</feature>
<feature type="strand" evidence="15">
    <location>
        <begin position="697"/>
        <end position="699"/>
    </location>
</feature>
<feature type="strand" evidence="15">
    <location>
        <begin position="701"/>
        <end position="703"/>
    </location>
</feature>
<feature type="helix" evidence="15">
    <location>
        <begin position="706"/>
        <end position="713"/>
    </location>
</feature>
<feature type="helix" evidence="15">
    <location>
        <begin position="721"/>
        <end position="730"/>
    </location>
</feature>
<feature type="helix" evidence="15">
    <location>
        <begin position="736"/>
        <end position="739"/>
    </location>
</feature>
<protein>
    <recommendedName>
        <fullName evidence="12">DNA topoisomerase 2-binding protein 1</fullName>
    </recommendedName>
    <alternativeName>
        <fullName evidence="11">DNA topoisomerase II-beta-binding protein 1</fullName>
        <shortName evidence="11">TopBP1</shortName>
    </alternativeName>
    <alternativeName>
        <fullName evidence="12">DNA topoisomerase II-binding protein 1</fullName>
    </alternativeName>
</protein>
<accession>Q6ZQF0</accession>
<accession>Q6P6P0</accession>
<accession>Q80Y33</accession>
<accession>Q8BUI0</accession>
<accession>Q8BUK1</accession>
<accession>Q8R348</accession>
<accession>Q91VX3</accession>
<accession>Q922X8</accession>